<comment type="function">
    <text evidence="1">Catalyzes the anti-1,4-elimination of the C-3 phosphate and the C-6 proR hydrogen from 5-enolpyruvylshikimate-3-phosphate (EPSP) to yield chorismate, which is the branch point compound that serves as the starting substrate for the three terminal pathways of aromatic amino acid biosynthesis. This reaction introduces a second double bond into the aromatic ring system.</text>
</comment>
<comment type="catalytic activity">
    <reaction evidence="1">
        <text>5-O-(1-carboxyvinyl)-3-phosphoshikimate = chorismate + phosphate</text>
        <dbReference type="Rhea" id="RHEA:21020"/>
        <dbReference type="ChEBI" id="CHEBI:29748"/>
        <dbReference type="ChEBI" id="CHEBI:43474"/>
        <dbReference type="ChEBI" id="CHEBI:57701"/>
        <dbReference type="EC" id="4.2.3.5"/>
    </reaction>
</comment>
<comment type="cofactor">
    <cofactor evidence="1">
        <name>FMNH2</name>
        <dbReference type="ChEBI" id="CHEBI:57618"/>
    </cofactor>
    <text evidence="1">Reduced FMN (FMNH(2)).</text>
</comment>
<comment type="pathway">
    <text evidence="1">Metabolic intermediate biosynthesis; chorismate biosynthesis; chorismate from D-erythrose 4-phosphate and phosphoenolpyruvate: step 7/7.</text>
</comment>
<comment type="subunit">
    <text evidence="1">Homotetramer.</text>
</comment>
<comment type="similarity">
    <text evidence="1">Belongs to the chorismate synthase family.</text>
</comment>
<protein>
    <recommendedName>
        <fullName evidence="1">Chorismate synthase</fullName>
        <shortName evidence="1">CS</shortName>
        <ecNumber evidence="1">4.2.3.5</ecNumber>
    </recommendedName>
    <alternativeName>
        <fullName evidence="1">5-enolpyruvylshikimate-3-phosphate phospholyase</fullName>
    </alternativeName>
</protein>
<evidence type="ECO:0000255" key="1">
    <source>
        <dbReference type="HAMAP-Rule" id="MF_00300"/>
    </source>
</evidence>
<evidence type="ECO:0000256" key="2">
    <source>
        <dbReference type="SAM" id="MobiDB-lite"/>
    </source>
</evidence>
<dbReference type="EC" id="4.2.3.5" evidence="1"/>
<dbReference type="EMBL" id="CR378672">
    <property type="protein sequence ID" value="CAG21092.1"/>
    <property type="molecule type" value="Genomic_DNA"/>
</dbReference>
<dbReference type="RefSeq" id="WP_011219369.1">
    <property type="nucleotide sequence ID" value="NC_006370.1"/>
</dbReference>
<dbReference type="SMR" id="Q6LNN4"/>
<dbReference type="STRING" id="298386.PBPRA2714"/>
<dbReference type="KEGG" id="ppr:PBPRA2714"/>
<dbReference type="eggNOG" id="COG0082">
    <property type="taxonomic scope" value="Bacteria"/>
</dbReference>
<dbReference type="HOGENOM" id="CLU_034547_0_2_6"/>
<dbReference type="UniPathway" id="UPA00053">
    <property type="reaction ID" value="UER00090"/>
</dbReference>
<dbReference type="Proteomes" id="UP000000593">
    <property type="component" value="Chromosome 1"/>
</dbReference>
<dbReference type="GO" id="GO:0005829">
    <property type="term" value="C:cytosol"/>
    <property type="evidence" value="ECO:0007669"/>
    <property type="project" value="TreeGrafter"/>
</dbReference>
<dbReference type="GO" id="GO:0004107">
    <property type="term" value="F:chorismate synthase activity"/>
    <property type="evidence" value="ECO:0007669"/>
    <property type="project" value="UniProtKB-UniRule"/>
</dbReference>
<dbReference type="GO" id="GO:0010181">
    <property type="term" value="F:FMN binding"/>
    <property type="evidence" value="ECO:0007669"/>
    <property type="project" value="TreeGrafter"/>
</dbReference>
<dbReference type="GO" id="GO:0008652">
    <property type="term" value="P:amino acid biosynthetic process"/>
    <property type="evidence" value="ECO:0007669"/>
    <property type="project" value="UniProtKB-KW"/>
</dbReference>
<dbReference type="GO" id="GO:0009073">
    <property type="term" value="P:aromatic amino acid family biosynthetic process"/>
    <property type="evidence" value="ECO:0007669"/>
    <property type="project" value="UniProtKB-KW"/>
</dbReference>
<dbReference type="GO" id="GO:0009423">
    <property type="term" value="P:chorismate biosynthetic process"/>
    <property type="evidence" value="ECO:0007669"/>
    <property type="project" value="UniProtKB-UniRule"/>
</dbReference>
<dbReference type="CDD" id="cd07304">
    <property type="entry name" value="Chorismate_synthase"/>
    <property type="match status" value="1"/>
</dbReference>
<dbReference type="FunFam" id="3.60.150.10:FF:000001">
    <property type="entry name" value="Chorismate synthase"/>
    <property type="match status" value="1"/>
</dbReference>
<dbReference type="Gene3D" id="3.60.150.10">
    <property type="entry name" value="Chorismate synthase AroC"/>
    <property type="match status" value="1"/>
</dbReference>
<dbReference type="HAMAP" id="MF_00300">
    <property type="entry name" value="Chorismate_synth"/>
    <property type="match status" value="1"/>
</dbReference>
<dbReference type="InterPro" id="IPR000453">
    <property type="entry name" value="Chorismate_synth"/>
</dbReference>
<dbReference type="InterPro" id="IPR035904">
    <property type="entry name" value="Chorismate_synth_AroC_sf"/>
</dbReference>
<dbReference type="InterPro" id="IPR020541">
    <property type="entry name" value="Chorismate_synthase_CS"/>
</dbReference>
<dbReference type="NCBIfam" id="TIGR00033">
    <property type="entry name" value="aroC"/>
    <property type="match status" value="1"/>
</dbReference>
<dbReference type="NCBIfam" id="NF003793">
    <property type="entry name" value="PRK05382.1"/>
    <property type="match status" value="1"/>
</dbReference>
<dbReference type="PANTHER" id="PTHR21085">
    <property type="entry name" value="CHORISMATE SYNTHASE"/>
    <property type="match status" value="1"/>
</dbReference>
<dbReference type="PANTHER" id="PTHR21085:SF0">
    <property type="entry name" value="CHORISMATE SYNTHASE"/>
    <property type="match status" value="1"/>
</dbReference>
<dbReference type="Pfam" id="PF01264">
    <property type="entry name" value="Chorismate_synt"/>
    <property type="match status" value="1"/>
</dbReference>
<dbReference type="PIRSF" id="PIRSF001456">
    <property type="entry name" value="Chorismate_synth"/>
    <property type="match status" value="1"/>
</dbReference>
<dbReference type="SUPFAM" id="SSF103263">
    <property type="entry name" value="Chorismate synthase, AroC"/>
    <property type="match status" value="1"/>
</dbReference>
<dbReference type="PROSITE" id="PS00787">
    <property type="entry name" value="CHORISMATE_SYNTHASE_1"/>
    <property type="match status" value="1"/>
</dbReference>
<dbReference type="PROSITE" id="PS00788">
    <property type="entry name" value="CHORISMATE_SYNTHASE_2"/>
    <property type="match status" value="1"/>
</dbReference>
<dbReference type="PROSITE" id="PS00789">
    <property type="entry name" value="CHORISMATE_SYNTHASE_3"/>
    <property type="match status" value="1"/>
</dbReference>
<name>AROC_PHOPR</name>
<sequence length="361" mass="39139">MAGNTIGQLFRVTTFGESHGIALGCIIDGCPPGLSLTEKDMQHDLDRRRPGTSKYTTQRREADEVKILSGVFEGQTTGTSIGLLIENTDQRSKDYSNIQDLFRPGHADYTYHQKYGVRDYRGGGRSSARETAMRVAAGAVAKKYLKQIHGIEVRAYLSQMGAVKIDKVDWEQIEQNAFFCPDADKVDAFDELIRKLKKEGDSIGAKLTVVASNVPVGLGEPVFDRLDADVAHSLMSINAVKGVEIGDGFEVIEQRGSQHRDEMTLDGFKTNHAGGILGGISSGQNIVAHIALKPTSSITVPGETITSKGESAEVITKGRHDPCVGIRAVPIAEAMLAITLMDHLLRHRGQNADVVTTTPKI</sequence>
<keyword id="KW-0028">Amino-acid biosynthesis</keyword>
<keyword id="KW-0057">Aromatic amino acid biosynthesis</keyword>
<keyword id="KW-0274">FAD</keyword>
<keyword id="KW-0285">Flavoprotein</keyword>
<keyword id="KW-0288">FMN</keyword>
<keyword id="KW-0456">Lyase</keyword>
<keyword id="KW-0521">NADP</keyword>
<keyword id="KW-1185">Reference proteome</keyword>
<proteinExistence type="inferred from homology"/>
<accession>Q6LNN4</accession>
<feature type="chain" id="PRO_0000140625" description="Chorismate synthase">
    <location>
        <begin position="1"/>
        <end position="361"/>
    </location>
</feature>
<feature type="region of interest" description="Disordered" evidence="2">
    <location>
        <begin position="38"/>
        <end position="58"/>
    </location>
</feature>
<feature type="compositionally biased region" description="Basic and acidic residues" evidence="2">
    <location>
        <begin position="38"/>
        <end position="49"/>
    </location>
</feature>
<feature type="binding site" evidence="1">
    <location>
        <position position="48"/>
    </location>
    <ligand>
        <name>NADP(+)</name>
        <dbReference type="ChEBI" id="CHEBI:58349"/>
    </ligand>
</feature>
<feature type="binding site" evidence="1">
    <location>
        <begin position="125"/>
        <end position="127"/>
    </location>
    <ligand>
        <name>FMN</name>
        <dbReference type="ChEBI" id="CHEBI:58210"/>
    </ligand>
</feature>
<feature type="binding site" evidence="1">
    <location>
        <begin position="238"/>
        <end position="239"/>
    </location>
    <ligand>
        <name>FMN</name>
        <dbReference type="ChEBI" id="CHEBI:58210"/>
    </ligand>
</feature>
<feature type="binding site" evidence="1">
    <location>
        <position position="278"/>
    </location>
    <ligand>
        <name>FMN</name>
        <dbReference type="ChEBI" id="CHEBI:58210"/>
    </ligand>
</feature>
<feature type="binding site" evidence="1">
    <location>
        <begin position="293"/>
        <end position="297"/>
    </location>
    <ligand>
        <name>FMN</name>
        <dbReference type="ChEBI" id="CHEBI:58210"/>
    </ligand>
</feature>
<feature type="binding site" evidence="1">
    <location>
        <position position="319"/>
    </location>
    <ligand>
        <name>FMN</name>
        <dbReference type="ChEBI" id="CHEBI:58210"/>
    </ligand>
</feature>
<reference key="1">
    <citation type="journal article" date="2005" name="Science">
        <title>Life at depth: Photobacterium profundum genome sequence and expression analysis.</title>
        <authorList>
            <person name="Vezzi A."/>
            <person name="Campanaro S."/>
            <person name="D'Angelo M."/>
            <person name="Simonato F."/>
            <person name="Vitulo N."/>
            <person name="Lauro F.M."/>
            <person name="Cestaro A."/>
            <person name="Malacrida G."/>
            <person name="Simionati B."/>
            <person name="Cannata N."/>
            <person name="Romualdi C."/>
            <person name="Bartlett D.H."/>
            <person name="Valle G."/>
        </authorList>
    </citation>
    <scope>NUCLEOTIDE SEQUENCE [LARGE SCALE GENOMIC DNA]</scope>
    <source>
        <strain>ATCC BAA-1253 / SS9</strain>
    </source>
</reference>
<organism>
    <name type="scientific">Photobacterium profundum (strain SS9)</name>
    <dbReference type="NCBI Taxonomy" id="298386"/>
    <lineage>
        <taxon>Bacteria</taxon>
        <taxon>Pseudomonadati</taxon>
        <taxon>Pseudomonadota</taxon>
        <taxon>Gammaproteobacteria</taxon>
        <taxon>Vibrionales</taxon>
        <taxon>Vibrionaceae</taxon>
        <taxon>Photobacterium</taxon>
    </lineage>
</organism>
<gene>
    <name evidence="1" type="primary">aroC</name>
    <name type="ordered locus">PBPRA2714</name>
</gene>